<evidence type="ECO:0000255" key="1">
    <source>
        <dbReference type="HAMAP-Rule" id="MF_01347"/>
    </source>
</evidence>
<feature type="chain" id="PRO_0000339526" description="ATP synthase subunit beta 1">
    <location>
        <begin position="1"/>
        <end position="462"/>
    </location>
</feature>
<feature type="binding site" evidence="1">
    <location>
        <begin position="152"/>
        <end position="159"/>
    </location>
    <ligand>
        <name>ATP</name>
        <dbReference type="ChEBI" id="CHEBI:30616"/>
    </ligand>
</feature>
<name>ATPB1_DINSH</name>
<protein>
    <recommendedName>
        <fullName evidence="1">ATP synthase subunit beta 1</fullName>
        <ecNumber evidence="1">7.1.2.2</ecNumber>
    </recommendedName>
    <alternativeName>
        <fullName evidence="1">ATP synthase F1 sector subunit beta 1</fullName>
    </alternativeName>
    <alternativeName>
        <fullName evidence="1">F-ATPase subunit beta 1</fullName>
    </alternativeName>
</protein>
<comment type="function">
    <text evidence="1">Produces ATP from ADP in the presence of a proton gradient across the membrane. The catalytic sites are hosted primarily by the beta subunits.</text>
</comment>
<comment type="catalytic activity">
    <reaction evidence="1">
        <text>ATP + H2O + 4 H(+)(in) = ADP + phosphate + 5 H(+)(out)</text>
        <dbReference type="Rhea" id="RHEA:57720"/>
        <dbReference type="ChEBI" id="CHEBI:15377"/>
        <dbReference type="ChEBI" id="CHEBI:15378"/>
        <dbReference type="ChEBI" id="CHEBI:30616"/>
        <dbReference type="ChEBI" id="CHEBI:43474"/>
        <dbReference type="ChEBI" id="CHEBI:456216"/>
        <dbReference type="EC" id="7.1.2.2"/>
    </reaction>
</comment>
<comment type="subunit">
    <text evidence="1">F-type ATPases have 2 components, CF(1) - the catalytic core - and CF(0) - the membrane proton channel. CF(1) has five subunits: alpha(3), beta(3), gamma(1), delta(1), epsilon(1). CF(0) has four main subunits: a(1), b(1), b'(1) and c(9-12).</text>
</comment>
<comment type="subcellular location">
    <subcellularLocation>
        <location evidence="1">Cell inner membrane</location>
        <topology evidence="1">Peripheral membrane protein</topology>
    </subcellularLocation>
</comment>
<comment type="similarity">
    <text evidence="1">Belongs to the ATPase alpha/beta chains family.</text>
</comment>
<keyword id="KW-0066">ATP synthesis</keyword>
<keyword id="KW-0067">ATP-binding</keyword>
<keyword id="KW-0997">Cell inner membrane</keyword>
<keyword id="KW-1003">Cell membrane</keyword>
<keyword id="KW-0139">CF(1)</keyword>
<keyword id="KW-0375">Hydrogen ion transport</keyword>
<keyword id="KW-0406">Ion transport</keyword>
<keyword id="KW-0472">Membrane</keyword>
<keyword id="KW-0547">Nucleotide-binding</keyword>
<keyword id="KW-1185">Reference proteome</keyword>
<keyword id="KW-1278">Translocase</keyword>
<keyword id="KW-0813">Transport</keyword>
<organism>
    <name type="scientific">Dinoroseobacter shibae (strain DSM 16493 / NCIMB 14021 / DFL 12)</name>
    <dbReference type="NCBI Taxonomy" id="398580"/>
    <lineage>
        <taxon>Bacteria</taxon>
        <taxon>Pseudomonadati</taxon>
        <taxon>Pseudomonadota</taxon>
        <taxon>Alphaproteobacteria</taxon>
        <taxon>Rhodobacterales</taxon>
        <taxon>Roseobacteraceae</taxon>
        <taxon>Dinoroseobacter</taxon>
    </lineage>
</organism>
<reference key="1">
    <citation type="journal article" date="2010" name="ISME J.">
        <title>The complete genome sequence of the algal symbiont Dinoroseobacter shibae: a hitchhiker's guide to life in the sea.</title>
        <authorList>
            <person name="Wagner-Dobler I."/>
            <person name="Ballhausen B."/>
            <person name="Berger M."/>
            <person name="Brinkhoff T."/>
            <person name="Buchholz I."/>
            <person name="Bunk B."/>
            <person name="Cypionka H."/>
            <person name="Daniel R."/>
            <person name="Drepper T."/>
            <person name="Gerdts G."/>
            <person name="Hahnke S."/>
            <person name="Han C."/>
            <person name="Jahn D."/>
            <person name="Kalhoefer D."/>
            <person name="Kiss H."/>
            <person name="Klenk H.P."/>
            <person name="Kyrpides N."/>
            <person name="Liebl W."/>
            <person name="Liesegang H."/>
            <person name="Meincke L."/>
            <person name="Pati A."/>
            <person name="Petersen J."/>
            <person name="Piekarski T."/>
            <person name="Pommerenke C."/>
            <person name="Pradella S."/>
            <person name="Pukall R."/>
            <person name="Rabus R."/>
            <person name="Stackebrandt E."/>
            <person name="Thole S."/>
            <person name="Thompson L."/>
            <person name="Tielen P."/>
            <person name="Tomasch J."/>
            <person name="von Jan M."/>
            <person name="Wanphrut N."/>
            <person name="Wichels A."/>
            <person name="Zech H."/>
            <person name="Simon M."/>
        </authorList>
    </citation>
    <scope>NUCLEOTIDE SEQUENCE [LARGE SCALE GENOMIC DNA]</scope>
    <source>
        <strain>DSM 16493 / NCIMB 14021 / DFL 12</strain>
    </source>
</reference>
<proteinExistence type="inferred from homology"/>
<accession>A8LN39</accession>
<dbReference type="EC" id="7.1.2.2" evidence="1"/>
<dbReference type="EMBL" id="CP000830">
    <property type="protein sequence ID" value="ABV92183.1"/>
    <property type="molecule type" value="Genomic_DNA"/>
</dbReference>
<dbReference type="RefSeq" id="WP_012177113.1">
    <property type="nucleotide sequence ID" value="NC_009952.1"/>
</dbReference>
<dbReference type="SMR" id="A8LN39"/>
<dbReference type="STRING" id="398580.Dshi_0435"/>
<dbReference type="KEGG" id="dsh:Dshi_0435"/>
<dbReference type="eggNOG" id="COG0055">
    <property type="taxonomic scope" value="Bacteria"/>
</dbReference>
<dbReference type="HOGENOM" id="CLU_022398_0_2_5"/>
<dbReference type="OrthoDB" id="9801639at2"/>
<dbReference type="Proteomes" id="UP000006833">
    <property type="component" value="Chromosome"/>
</dbReference>
<dbReference type="GO" id="GO:0005886">
    <property type="term" value="C:plasma membrane"/>
    <property type="evidence" value="ECO:0007669"/>
    <property type="project" value="UniProtKB-SubCell"/>
</dbReference>
<dbReference type="GO" id="GO:0045259">
    <property type="term" value="C:proton-transporting ATP synthase complex"/>
    <property type="evidence" value="ECO:0007669"/>
    <property type="project" value="UniProtKB-KW"/>
</dbReference>
<dbReference type="GO" id="GO:0005524">
    <property type="term" value="F:ATP binding"/>
    <property type="evidence" value="ECO:0007669"/>
    <property type="project" value="UniProtKB-UniRule"/>
</dbReference>
<dbReference type="GO" id="GO:0016887">
    <property type="term" value="F:ATP hydrolysis activity"/>
    <property type="evidence" value="ECO:0007669"/>
    <property type="project" value="InterPro"/>
</dbReference>
<dbReference type="GO" id="GO:0046933">
    <property type="term" value="F:proton-transporting ATP synthase activity, rotational mechanism"/>
    <property type="evidence" value="ECO:0007669"/>
    <property type="project" value="UniProtKB-UniRule"/>
</dbReference>
<dbReference type="CDD" id="cd18110">
    <property type="entry name" value="ATP-synt_F1_beta_C"/>
    <property type="match status" value="1"/>
</dbReference>
<dbReference type="CDD" id="cd18115">
    <property type="entry name" value="ATP-synt_F1_beta_N"/>
    <property type="match status" value="1"/>
</dbReference>
<dbReference type="CDD" id="cd01133">
    <property type="entry name" value="F1-ATPase_beta_CD"/>
    <property type="match status" value="1"/>
</dbReference>
<dbReference type="FunFam" id="3.40.50.300:FF:001630">
    <property type="entry name" value="ATP synthase subunit beta"/>
    <property type="match status" value="1"/>
</dbReference>
<dbReference type="Gene3D" id="2.40.10.170">
    <property type="match status" value="1"/>
</dbReference>
<dbReference type="Gene3D" id="1.10.1140.10">
    <property type="entry name" value="Bovine Mitochondrial F1-atpase, Atp Synthase Beta Chain, Chain D, domain 3"/>
    <property type="match status" value="1"/>
</dbReference>
<dbReference type="Gene3D" id="3.40.50.300">
    <property type="entry name" value="P-loop containing nucleotide triphosphate hydrolases"/>
    <property type="match status" value="1"/>
</dbReference>
<dbReference type="HAMAP" id="MF_01347">
    <property type="entry name" value="ATP_synth_beta_bact"/>
    <property type="match status" value="1"/>
</dbReference>
<dbReference type="InterPro" id="IPR003593">
    <property type="entry name" value="AAA+_ATPase"/>
</dbReference>
<dbReference type="InterPro" id="IPR055190">
    <property type="entry name" value="ATP-synt_VA_C"/>
</dbReference>
<dbReference type="InterPro" id="IPR005722">
    <property type="entry name" value="ATP_synth_F1_bsu"/>
</dbReference>
<dbReference type="InterPro" id="IPR020003">
    <property type="entry name" value="ATPase_a/bsu_AS"/>
</dbReference>
<dbReference type="InterPro" id="IPR050053">
    <property type="entry name" value="ATPase_alpha/beta_chains"/>
</dbReference>
<dbReference type="InterPro" id="IPR004100">
    <property type="entry name" value="ATPase_F1/V1/A1_a/bsu_N"/>
</dbReference>
<dbReference type="InterPro" id="IPR036121">
    <property type="entry name" value="ATPase_F1/V1/A1_a/bsu_N_sf"/>
</dbReference>
<dbReference type="InterPro" id="IPR000194">
    <property type="entry name" value="ATPase_F1/V1/A1_a/bsu_nucl-bd"/>
</dbReference>
<dbReference type="InterPro" id="IPR024034">
    <property type="entry name" value="ATPase_F1/V1_b/a_C"/>
</dbReference>
<dbReference type="InterPro" id="IPR027417">
    <property type="entry name" value="P-loop_NTPase"/>
</dbReference>
<dbReference type="NCBIfam" id="TIGR01039">
    <property type="entry name" value="atpD"/>
    <property type="match status" value="1"/>
</dbReference>
<dbReference type="PANTHER" id="PTHR15184">
    <property type="entry name" value="ATP SYNTHASE"/>
    <property type="match status" value="1"/>
</dbReference>
<dbReference type="PANTHER" id="PTHR15184:SF71">
    <property type="entry name" value="ATP SYNTHASE SUBUNIT BETA, MITOCHONDRIAL"/>
    <property type="match status" value="1"/>
</dbReference>
<dbReference type="Pfam" id="PF00006">
    <property type="entry name" value="ATP-synt_ab"/>
    <property type="match status" value="1"/>
</dbReference>
<dbReference type="Pfam" id="PF02874">
    <property type="entry name" value="ATP-synt_ab_N"/>
    <property type="match status" value="1"/>
</dbReference>
<dbReference type="Pfam" id="PF22919">
    <property type="entry name" value="ATP-synt_VA_C"/>
    <property type="match status" value="1"/>
</dbReference>
<dbReference type="SMART" id="SM00382">
    <property type="entry name" value="AAA"/>
    <property type="match status" value="1"/>
</dbReference>
<dbReference type="SUPFAM" id="SSF47917">
    <property type="entry name" value="C-terminal domain of alpha and beta subunits of F1 ATP synthase"/>
    <property type="match status" value="1"/>
</dbReference>
<dbReference type="SUPFAM" id="SSF50615">
    <property type="entry name" value="N-terminal domain of alpha and beta subunits of F1 ATP synthase"/>
    <property type="match status" value="1"/>
</dbReference>
<dbReference type="SUPFAM" id="SSF52540">
    <property type="entry name" value="P-loop containing nucleoside triphosphate hydrolases"/>
    <property type="match status" value="1"/>
</dbReference>
<dbReference type="PROSITE" id="PS00152">
    <property type="entry name" value="ATPASE_ALPHA_BETA"/>
    <property type="match status" value="1"/>
</dbReference>
<gene>
    <name evidence="1" type="primary">atpD1</name>
    <name type="ordered locus">Dshi_0435</name>
</gene>
<sequence>MPADPEVHFEGTIVAIRGGVVDVAFAEAVPRIHALIVAGGVAMEVASIVGEGVVRCIALGPTRGLGLGTRATGTRAGIEVPVGEGVLGRMLDMFGAPLDGAPPPEATARRPIHRPPPVLSDRVLRAEVLETGIKAIDLLSPIERGGKTGLFGGAGVGKTVLLSELIHNTVEHHHGVSLFCGIGERSREAEELWREMGEAGVRERMVMLFGQMNEAPGVRFLVGHSALTMAEYFRDDREQDVLLLIDNIFRFVQAGSEVSGLLGRMPSRVGYQPTLATELAALQERIASTRRGAITSIQAVYVPADDFTDPAAAHIFSHLSASVVLSRKRASEGLYPAVDPLASTSVMLTPEVVGQRHYDIARGVRRTLAEYEDLRDIIAMLGIEELSAHDRAVVARARRLERFLTQPFFTVGAAAGTLGKLVPIAETLDGCEEILSQTSFERPESAYYMIGALSDLRKEAAA</sequence>